<protein>
    <recommendedName>
        <fullName evidence="1">UDP-3-O-acylglucosamine N-acyltransferase 2</fullName>
        <ecNumber evidence="1">2.3.1.191</ecNumber>
    </recommendedName>
</protein>
<evidence type="ECO:0000255" key="1">
    <source>
        <dbReference type="HAMAP-Rule" id="MF_00523"/>
    </source>
</evidence>
<organism>
    <name type="scientific">Legionella pneumophila (strain Paris)</name>
    <dbReference type="NCBI Taxonomy" id="297246"/>
    <lineage>
        <taxon>Bacteria</taxon>
        <taxon>Pseudomonadati</taxon>
        <taxon>Pseudomonadota</taxon>
        <taxon>Gammaproteobacteria</taxon>
        <taxon>Legionellales</taxon>
        <taxon>Legionellaceae</taxon>
        <taxon>Legionella</taxon>
    </lineage>
</organism>
<comment type="function">
    <text evidence="1">Catalyzes the N-acylation of UDP-3-O-acylglucosamine using 3-hydroxyacyl-ACP as the acyl donor. Is involved in the biosynthesis of lipid A, a phosphorylated glycolipid that anchors the lipopolysaccharide to the outer membrane of the cell.</text>
</comment>
<comment type="catalytic activity">
    <reaction evidence="1">
        <text>a UDP-3-O-[(3R)-3-hydroxyacyl]-alpha-D-glucosamine + a (3R)-hydroxyacyl-[ACP] = a UDP-2-N,3-O-bis[(3R)-3-hydroxyacyl]-alpha-D-glucosamine + holo-[ACP] + H(+)</text>
        <dbReference type="Rhea" id="RHEA:53836"/>
        <dbReference type="Rhea" id="RHEA-COMP:9685"/>
        <dbReference type="Rhea" id="RHEA-COMP:9945"/>
        <dbReference type="ChEBI" id="CHEBI:15378"/>
        <dbReference type="ChEBI" id="CHEBI:64479"/>
        <dbReference type="ChEBI" id="CHEBI:78827"/>
        <dbReference type="ChEBI" id="CHEBI:137740"/>
        <dbReference type="ChEBI" id="CHEBI:137748"/>
        <dbReference type="EC" id="2.3.1.191"/>
    </reaction>
</comment>
<comment type="pathway">
    <text evidence="1">Bacterial outer membrane biogenesis; LPS lipid A biosynthesis.</text>
</comment>
<comment type="subunit">
    <text evidence="1">Homotrimer.</text>
</comment>
<comment type="similarity">
    <text evidence="1">Belongs to the transferase hexapeptide repeat family. LpxD subfamily.</text>
</comment>
<name>LPXD2_LEGPA</name>
<sequence length="343" mass="36457">MSNYQFTKPAGPFRLSELAKISGATLYEGKGETFTVSGLAKLSEATSNDLVMLHQKKYVKELKNTAARSCIIGPDYVKFAPDSMYLLVHPNPYKAFALIAQAFYPSEKSSSFIAPSAKIESTALIGSDCSIAHGAYVGNHARIGKRCKIGVNTYIGDGVTIGDNCIIEDNVSIRHAVIGSNVVVYPGARIGQDGFGFASDAEGHYKIPHAGGVIIGNDVEIGANTCIDRGSLGNTVIEDWCRLDNLVQIGHNVKIGKGSIIVAQVGIAGSTELGEHVTLAGQVGVIGHLKIGKGATVLTCSKVLRNVQPGDRVIGYPAISISDWQKQIRFLKTAIKSKNPLKS</sequence>
<feature type="chain" id="PRO_0000264390" description="UDP-3-O-acylglucosamine N-acyltransferase 2">
    <location>
        <begin position="1"/>
        <end position="343"/>
    </location>
</feature>
<feature type="active site" description="Proton acceptor" evidence="1">
    <location>
        <position position="251"/>
    </location>
</feature>
<keyword id="KW-0012">Acyltransferase</keyword>
<keyword id="KW-0441">Lipid A biosynthesis</keyword>
<keyword id="KW-0444">Lipid biosynthesis</keyword>
<keyword id="KW-0443">Lipid metabolism</keyword>
<keyword id="KW-0677">Repeat</keyword>
<keyword id="KW-0808">Transferase</keyword>
<accession>Q5X0T1</accession>
<dbReference type="EC" id="2.3.1.191" evidence="1"/>
<dbReference type="EMBL" id="CR628336">
    <property type="protein sequence ID" value="CAH14168.1"/>
    <property type="molecule type" value="Genomic_DNA"/>
</dbReference>
<dbReference type="SMR" id="Q5X0T1"/>
<dbReference type="KEGG" id="lpp:lpp3015"/>
<dbReference type="LegioList" id="lpp3015"/>
<dbReference type="HOGENOM" id="CLU_049865_0_0_6"/>
<dbReference type="UniPathway" id="UPA00973"/>
<dbReference type="GO" id="GO:0016020">
    <property type="term" value="C:membrane"/>
    <property type="evidence" value="ECO:0007669"/>
    <property type="project" value="GOC"/>
</dbReference>
<dbReference type="GO" id="GO:0016410">
    <property type="term" value="F:N-acyltransferase activity"/>
    <property type="evidence" value="ECO:0007669"/>
    <property type="project" value="InterPro"/>
</dbReference>
<dbReference type="GO" id="GO:0009245">
    <property type="term" value="P:lipid A biosynthetic process"/>
    <property type="evidence" value="ECO:0007669"/>
    <property type="project" value="UniProtKB-UniRule"/>
</dbReference>
<dbReference type="CDD" id="cd03352">
    <property type="entry name" value="LbH_LpxD"/>
    <property type="match status" value="1"/>
</dbReference>
<dbReference type="Gene3D" id="2.160.10.10">
    <property type="entry name" value="Hexapeptide repeat proteins"/>
    <property type="match status" value="1"/>
</dbReference>
<dbReference type="Gene3D" id="3.40.1390.10">
    <property type="entry name" value="MurE/MurF, N-terminal domain"/>
    <property type="match status" value="1"/>
</dbReference>
<dbReference type="HAMAP" id="MF_00523">
    <property type="entry name" value="LpxD"/>
    <property type="match status" value="1"/>
</dbReference>
<dbReference type="InterPro" id="IPR001451">
    <property type="entry name" value="Hexapep"/>
</dbReference>
<dbReference type="InterPro" id="IPR018357">
    <property type="entry name" value="Hexapep_transf_CS"/>
</dbReference>
<dbReference type="InterPro" id="IPR007691">
    <property type="entry name" value="LpxD"/>
</dbReference>
<dbReference type="InterPro" id="IPR011004">
    <property type="entry name" value="Trimer_LpxA-like_sf"/>
</dbReference>
<dbReference type="InterPro" id="IPR020573">
    <property type="entry name" value="UDP_GlcNAc_AcTrfase_non-rep"/>
</dbReference>
<dbReference type="NCBIfam" id="TIGR01853">
    <property type="entry name" value="lipid_A_lpxD"/>
    <property type="match status" value="1"/>
</dbReference>
<dbReference type="NCBIfam" id="NF002060">
    <property type="entry name" value="PRK00892.1"/>
    <property type="match status" value="1"/>
</dbReference>
<dbReference type="PANTHER" id="PTHR43378">
    <property type="entry name" value="UDP-3-O-ACYLGLUCOSAMINE N-ACYLTRANSFERASE"/>
    <property type="match status" value="1"/>
</dbReference>
<dbReference type="PANTHER" id="PTHR43378:SF2">
    <property type="entry name" value="UDP-3-O-ACYLGLUCOSAMINE N-ACYLTRANSFERASE 1, MITOCHONDRIAL-RELATED"/>
    <property type="match status" value="1"/>
</dbReference>
<dbReference type="Pfam" id="PF00132">
    <property type="entry name" value="Hexapep"/>
    <property type="match status" value="1"/>
</dbReference>
<dbReference type="Pfam" id="PF04613">
    <property type="entry name" value="LpxD"/>
    <property type="match status" value="1"/>
</dbReference>
<dbReference type="SUPFAM" id="SSF51161">
    <property type="entry name" value="Trimeric LpxA-like enzymes"/>
    <property type="match status" value="1"/>
</dbReference>
<dbReference type="PROSITE" id="PS00101">
    <property type="entry name" value="HEXAPEP_TRANSFERASES"/>
    <property type="match status" value="1"/>
</dbReference>
<reference key="1">
    <citation type="journal article" date="2004" name="Nat. Genet.">
        <title>Evidence in the Legionella pneumophila genome for exploitation of host cell functions and high genome plasticity.</title>
        <authorList>
            <person name="Cazalet C."/>
            <person name="Rusniok C."/>
            <person name="Brueggemann H."/>
            <person name="Zidane N."/>
            <person name="Magnier A."/>
            <person name="Ma L."/>
            <person name="Tichit M."/>
            <person name="Jarraud S."/>
            <person name="Bouchier C."/>
            <person name="Vandenesch F."/>
            <person name="Kunst F."/>
            <person name="Etienne J."/>
            <person name="Glaser P."/>
            <person name="Buchrieser C."/>
        </authorList>
    </citation>
    <scope>NUCLEOTIDE SEQUENCE [LARGE SCALE GENOMIC DNA]</scope>
    <source>
        <strain>Paris</strain>
    </source>
</reference>
<gene>
    <name evidence="1" type="primary">lpxD2</name>
    <name type="ordered locus">lpp3015</name>
</gene>
<proteinExistence type="inferred from homology"/>